<dbReference type="EC" id="2.7.2.3" evidence="1"/>
<dbReference type="EMBL" id="CP000284">
    <property type="protein sequence ID" value="ABE50514.1"/>
    <property type="molecule type" value="Genomic_DNA"/>
</dbReference>
<dbReference type="RefSeq" id="WP_011480468.1">
    <property type="nucleotide sequence ID" value="NC_007947.1"/>
</dbReference>
<dbReference type="SMR" id="Q1GZ23"/>
<dbReference type="STRING" id="265072.Mfla_2247"/>
<dbReference type="KEGG" id="mfa:Mfla_2247"/>
<dbReference type="eggNOG" id="COG0126">
    <property type="taxonomic scope" value="Bacteria"/>
</dbReference>
<dbReference type="HOGENOM" id="CLU_025427_0_2_4"/>
<dbReference type="OrthoDB" id="9808460at2"/>
<dbReference type="UniPathway" id="UPA00109">
    <property type="reaction ID" value="UER00185"/>
</dbReference>
<dbReference type="Proteomes" id="UP000002440">
    <property type="component" value="Chromosome"/>
</dbReference>
<dbReference type="GO" id="GO:0005829">
    <property type="term" value="C:cytosol"/>
    <property type="evidence" value="ECO:0007669"/>
    <property type="project" value="TreeGrafter"/>
</dbReference>
<dbReference type="GO" id="GO:0043531">
    <property type="term" value="F:ADP binding"/>
    <property type="evidence" value="ECO:0007669"/>
    <property type="project" value="TreeGrafter"/>
</dbReference>
<dbReference type="GO" id="GO:0005524">
    <property type="term" value="F:ATP binding"/>
    <property type="evidence" value="ECO:0007669"/>
    <property type="project" value="UniProtKB-KW"/>
</dbReference>
<dbReference type="GO" id="GO:0004618">
    <property type="term" value="F:phosphoglycerate kinase activity"/>
    <property type="evidence" value="ECO:0007669"/>
    <property type="project" value="UniProtKB-UniRule"/>
</dbReference>
<dbReference type="GO" id="GO:0006094">
    <property type="term" value="P:gluconeogenesis"/>
    <property type="evidence" value="ECO:0007669"/>
    <property type="project" value="TreeGrafter"/>
</dbReference>
<dbReference type="GO" id="GO:0006096">
    <property type="term" value="P:glycolytic process"/>
    <property type="evidence" value="ECO:0007669"/>
    <property type="project" value="UniProtKB-UniRule"/>
</dbReference>
<dbReference type="FunFam" id="3.40.50.1260:FF:000001">
    <property type="entry name" value="Phosphoglycerate kinase"/>
    <property type="match status" value="1"/>
</dbReference>
<dbReference type="FunFam" id="3.40.50.1260:FF:000002">
    <property type="entry name" value="Phosphoglycerate kinase"/>
    <property type="match status" value="1"/>
</dbReference>
<dbReference type="Gene3D" id="3.40.50.1260">
    <property type="entry name" value="Phosphoglycerate kinase, N-terminal domain"/>
    <property type="match status" value="2"/>
</dbReference>
<dbReference type="HAMAP" id="MF_00145">
    <property type="entry name" value="Phosphoglyc_kinase"/>
    <property type="match status" value="1"/>
</dbReference>
<dbReference type="InterPro" id="IPR001576">
    <property type="entry name" value="Phosphoglycerate_kinase"/>
</dbReference>
<dbReference type="InterPro" id="IPR015911">
    <property type="entry name" value="Phosphoglycerate_kinase_CS"/>
</dbReference>
<dbReference type="InterPro" id="IPR015824">
    <property type="entry name" value="Phosphoglycerate_kinase_N"/>
</dbReference>
<dbReference type="InterPro" id="IPR036043">
    <property type="entry name" value="Phosphoglycerate_kinase_sf"/>
</dbReference>
<dbReference type="PANTHER" id="PTHR11406">
    <property type="entry name" value="PHOSPHOGLYCERATE KINASE"/>
    <property type="match status" value="1"/>
</dbReference>
<dbReference type="PANTHER" id="PTHR11406:SF23">
    <property type="entry name" value="PHOSPHOGLYCERATE KINASE 1, CHLOROPLASTIC-RELATED"/>
    <property type="match status" value="1"/>
</dbReference>
<dbReference type="Pfam" id="PF00162">
    <property type="entry name" value="PGK"/>
    <property type="match status" value="1"/>
</dbReference>
<dbReference type="PIRSF" id="PIRSF000724">
    <property type="entry name" value="Pgk"/>
    <property type="match status" value="1"/>
</dbReference>
<dbReference type="PRINTS" id="PR00477">
    <property type="entry name" value="PHGLYCKINASE"/>
</dbReference>
<dbReference type="SUPFAM" id="SSF53748">
    <property type="entry name" value="Phosphoglycerate kinase"/>
    <property type="match status" value="1"/>
</dbReference>
<dbReference type="PROSITE" id="PS00111">
    <property type="entry name" value="PGLYCERATE_KINASE"/>
    <property type="match status" value="1"/>
</dbReference>
<feature type="chain" id="PRO_1000058015" description="Phosphoglycerate kinase">
    <location>
        <begin position="1"/>
        <end position="393"/>
    </location>
</feature>
<feature type="binding site" evidence="1">
    <location>
        <begin position="21"/>
        <end position="23"/>
    </location>
    <ligand>
        <name>substrate</name>
    </ligand>
</feature>
<feature type="binding site" evidence="1">
    <location>
        <position position="36"/>
    </location>
    <ligand>
        <name>substrate</name>
    </ligand>
</feature>
<feature type="binding site" evidence="1">
    <location>
        <begin position="59"/>
        <end position="62"/>
    </location>
    <ligand>
        <name>substrate</name>
    </ligand>
</feature>
<feature type="binding site" evidence="1">
    <location>
        <position position="114"/>
    </location>
    <ligand>
        <name>substrate</name>
    </ligand>
</feature>
<feature type="binding site" evidence="1">
    <location>
        <position position="147"/>
    </location>
    <ligand>
        <name>substrate</name>
    </ligand>
</feature>
<feature type="binding site" evidence="1">
    <location>
        <position position="198"/>
    </location>
    <ligand>
        <name>ATP</name>
        <dbReference type="ChEBI" id="CHEBI:30616"/>
    </ligand>
</feature>
<feature type="binding site" evidence="1">
    <location>
        <position position="320"/>
    </location>
    <ligand>
        <name>ATP</name>
        <dbReference type="ChEBI" id="CHEBI:30616"/>
    </ligand>
</feature>
<feature type="binding site" evidence="1">
    <location>
        <begin position="346"/>
        <end position="349"/>
    </location>
    <ligand>
        <name>ATP</name>
        <dbReference type="ChEBI" id="CHEBI:30616"/>
    </ligand>
</feature>
<evidence type="ECO:0000255" key="1">
    <source>
        <dbReference type="HAMAP-Rule" id="MF_00145"/>
    </source>
</evidence>
<accession>Q1GZ23</accession>
<comment type="catalytic activity">
    <reaction evidence="1">
        <text>(2R)-3-phosphoglycerate + ATP = (2R)-3-phospho-glyceroyl phosphate + ADP</text>
        <dbReference type="Rhea" id="RHEA:14801"/>
        <dbReference type="ChEBI" id="CHEBI:30616"/>
        <dbReference type="ChEBI" id="CHEBI:57604"/>
        <dbReference type="ChEBI" id="CHEBI:58272"/>
        <dbReference type="ChEBI" id="CHEBI:456216"/>
        <dbReference type="EC" id="2.7.2.3"/>
    </reaction>
</comment>
<comment type="pathway">
    <text evidence="1">Carbohydrate degradation; glycolysis; pyruvate from D-glyceraldehyde 3-phosphate: step 2/5.</text>
</comment>
<comment type="subunit">
    <text evidence="1">Monomer.</text>
</comment>
<comment type="subcellular location">
    <subcellularLocation>
        <location evidence="1">Cytoplasm</location>
    </subcellularLocation>
</comment>
<comment type="similarity">
    <text evidence="1">Belongs to the phosphoglycerate kinase family.</text>
</comment>
<sequence>MTVINMTDLDLAGKRVFIRADLNVPVSDGKVTSDARITASIPTIRHALDAKARVMVTSHLGRPEEGVYSEENSLQPVADVLADKLGQPVRLIKDWVDGGFEVAEGEVVLLENCRFNKGEKKNAEETARKYAALCDVFVMDAFGTAHRAEASTYGVAQYAPVAAAGLLLVGELDALGKALCEPARPMVAIVGGSKVSTKLTVLESLAEKVDQLVVGGGIANTFLKAAGKPIGRSLSEDDLVPTAQCLMEKMAKRGAAVPIAVDVVCGKQFDANEPAVLKSAEDVADDDMIFDIGPESAKQLAEIILNAGTVVWNGPVGVFEFDQFGEGTKTIADAIAKTKAFTLAGGGDTIAAIQKYDIYDKVSYISTAGGAFLEFLEGKKLPAVEILEQRAKG</sequence>
<organism>
    <name type="scientific">Methylobacillus flagellatus (strain ATCC 51484 / DSM 6875 / VKM B-1610 / KT)</name>
    <dbReference type="NCBI Taxonomy" id="265072"/>
    <lineage>
        <taxon>Bacteria</taxon>
        <taxon>Pseudomonadati</taxon>
        <taxon>Pseudomonadota</taxon>
        <taxon>Betaproteobacteria</taxon>
        <taxon>Nitrosomonadales</taxon>
        <taxon>Methylophilaceae</taxon>
        <taxon>Methylobacillus</taxon>
    </lineage>
</organism>
<name>PGK_METFK</name>
<protein>
    <recommendedName>
        <fullName evidence="1">Phosphoglycerate kinase</fullName>
        <ecNumber evidence="1">2.7.2.3</ecNumber>
    </recommendedName>
</protein>
<proteinExistence type="inferred from homology"/>
<keyword id="KW-0067">ATP-binding</keyword>
<keyword id="KW-0963">Cytoplasm</keyword>
<keyword id="KW-0324">Glycolysis</keyword>
<keyword id="KW-0418">Kinase</keyword>
<keyword id="KW-0547">Nucleotide-binding</keyword>
<keyword id="KW-1185">Reference proteome</keyword>
<keyword id="KW-0808">Transferase</keyword>
<gene>
    <name evidence="1" type="primary">pgk</name>
    <name type="ordered locus">Mfla_2247</name>
</gene>
<reference key="1">
    <citation type="submission" date="2006-03" db="EMBL/GenBank/DDBJ databases">
        <title>Complete sequence of Methylobacillus flagellatus KT.</title>
        <authorList>
            <consortium name="US DOE Joint Genome Institute"/>
            <person name="Copeland A."/>
            <person name="Lucas S."/>
            <person name="Lapidus A."/>
            <person name="Barry K."/>
            <person name="Detter J.C."/>
            <person name="Glavina del Rio T."/>
            <person name="Hammon N."/>
            <person name="Israni S."/>
            <person name="Dalin E."/>
            <person name="Tice H."/>
            <person name="Pitluck S."/>
            <person name="Brettin T."/>
            <person name="Bruce D."/>
            <person name="Han C."/>
            <person name="Tapia R."/>
            <person name="Saunders E."/>
            <person name="Gilna P."/>
            <person name="Schmutz J."/>
            <person name="Larimer F."/>
            <person name="Land M."/>
            <person name="Kyrpides N."/>
            <person name="Anderson I."/>
            <person name="Richardson P."/>
        </authorList>
    </citation>
    <scope>NUCLEOTIDE SEQUENCE [LARGE SCALE GENOMIC DNA]</scope>
    <source>
        <strain>ATCC 51484 / DSM 6875 / VKM B-1610 / KT</strain>
    </source>
</reference>